<keyword id="KW-1185">Reference proteome</keyword>
<keyword id="KW-0687">Ribonucleoprotein</keyword>
<keyword id="KW-0689">Ribosomal protein</keyword>
<protein>
    <recommendedName>
        <fullName evidence="1">Large ribosomal subunit protein uL13</fullName>
    </recommendedName>
    <alternativeName>
        <fullName evidence="2">50S ribosomal protein L13</fullName>
    </alternativeName>
</protein>
<comment type="function">
    <text evidence="1">This protein is one of the early assembly proteins of the 50S ribosomal subunit, although it is not seen to bind rRNA by itself. It is important during the early stages of 50S assembly.</text>
</comment>
<comment type="subunit">
    <text evidence="1">Part of the 50S ribosomal subunit.</text>
</comment>
<comment type="similarity">
    <text evidence="1">Belongs to the universal ribosomal protein uL13 family.</text>
</comment>
<sequence length="149" mass="16644">MKTYSATPKDIDRRWYVVDAEGMVLGRLASEVAKIIRGKHKPMYTPHMDTGDFVIVINASKVQVTGRKAEQKTYFSHTGYMGHEKHTPFASVLAKHPERVIEKAVYGMLPKTALGRQVLRRKLRVFAGAEHPHIAQSPAALTFSSAEAK</sequence>
<accession>C1A3Z5</accession>
<proteinExistence type="inferred from homology"/>
<dbReference type="EMBL" id="AP009153">
    <property type="protein sequence ID" value="BAH38820.1"/>
    <property type="molecule type" value="Genomic_DNA"/>
</dbReference>
<dbReference type="RefSeq" id="WP_012683267.1">
    <property type="nucleotide sequence ID" value="NC_012489.1"/>
</dbReference>
<dbReference type="SMR" id="C1A3Z5"/>
<dbReference type="STRING" id="379066.GAU_1778"/>
<dbReference type="KEGG" id="gau:GAU_1778"/>
<dbReference type="eggNOG" id="COG0102">
    <property type="taxonomic scope" value="Bacteria"/>
</dbReference>
<dbReference type="HOGENOM" id="CLU_082184_2_2_0"/>
<dbReference type="OrthoDB" id="9801330at2"/>
<dbReference type="Proteomes" id="UP000002209">
    <property type="component" value="Chromosome"/>
</dbReference>
<dbReference type="GO" id="GO:0022625">
    <property type="term" value="C:cytosolic large ribosomal subunit"/>
    <property type="evidence" value="ECO:0007669"/>
    <property type="project" value="TreeGrafter"/>
</dbReference>
<dbReference type="GO" id="GO:0003729">
    <property type="term" value="F:mRNA binding"/>
    <property type="evidence" value="ECO:0007669"/>
    <property type="project" value="TreeGrafter"/>
</dbReference>
<dbReference type="GO" id="GO:0003735">
    <property type="term" value="F:structural constituent of ribosome"/>
    <property type="evidence" value="ECO:0007669"/>
    <property type="project" value="InterPro"/>
</dbReference>
<dbReference type="GO" id="GO:0017148">
    <property type="term" value="P:negative regulation of translation"/>
    <property type="evidence" value="ECO:0007669"/>
    <property type="project" value="TreeGrafter"/>
</dbReference>
<dbReference type="GO" id="GO:0006412">
    <property type="term" value="P:translation"/>
    <property type="evidence" value="ECO:0007669"/>
    <property type="project" value="UniProtKB-UniRule"/>
</dbReference>
<dbReference type="CDD" id="cd00392">
    <property type="entry name" value="Ribosomal_L13"/>
    <property type="match status" value="1"/>
</dbReference>
<dbReference type="FunFam" id="3.90.1180.10:FF:000001">
    <property type="entry name" value="50S ribosomal protein L13"/>
    <property type="match status" value="1"/>
</dbReference>
<dbReference type="Gene3D" id="3.90.1180.10">
    <property type="entry name" value="Ribosomal protein L13"/>
    <property type="match status" value="1"/>
</dbReference>
<dbReference type="HAMAP" id="MF_01366">
    <property type="entry name" value="Ribosomal_uL13"/>
    <property type="match status" value="1"/>
</dbReference>
<dbReference type="InterPro" id="IPR005822">
    <property type="entry name" value="Ribosomal_uL13"/>
</dbReference>
<dbReference type="InterPro" id="IPR005823">
    <property type="entry name" value="Ribosomal_uL13_bac-type"/>
</dbReference>
<dbReference type="InterPro" id="IPR023563">
    <property type="entry name" value="Ribosomal_uL13_CS"/>
</dbReference>
<dbReference type="InterPro" id="IPR036899">
    <property type="entry name" value="Ribosomal_uL13_sf"/>
</dbReference>
<dbReference type="NCBIfam" id="TIGR01066">
    <property type="entry name" value="rplM_bact"/>
    <property type="match status" value="1"/>
</dbReference>
<dbReference type="PANTHER" id="PTHR11545:SF2">
    <property type="entry name" value="LARGE RIBOSOMAL SUBUNIT PROTEIN UL13M"/>
    <property type="match status" value="1"/>
</dbReference>
<dbReference type="PANTHER" id="PTHR11545">
    <property type="entry name" value="RIBOSOMAL PROTEIN L13"/>
    <property type="match status" value="1"/>
</dbReference>
<dbReference type="Pfam" id="PF00572">
    <property type="entry name" value="Ribosomal_L13"/>
    <property type="match status" value="1"/>
</dbReference>
<dbReference type="PIRSF" id="PIRSF002181">
    <property type="entry name" value="Ribosomal_L13"/>
    <property type="match status" value="1"/>
</dbReference>
<dbReference type="SUPFAM" id="SSF52161">
    <property type="entry name" value="Ribosomal protein L13"/>
    <property type="match status" value="1"/>
</dbReference>
<dbReference type="PROSITE" id="PS00783">
    <property type="entry name" value="RIBOSOMAL_L13"/>
    <property type="match status" value="1"/>
</dbReference>
<reference key="1">
    <citation type="submission" date="2006-03" db="EMBL/GenBank/DDBJ databases">
        <title>Complete genome sequence of Gemmatimonas aurantiaca T-27 that represents a novel phylum Gemmatimonadetes.</title>
        <authorList>
            <person name="Takasaki K."/>
            <person name="Ichikawa N."/>
            <person name="Miura H."/>
            <person name="Matsushita S."/>
            <person name="Watanabe Y."/>
            <person name="Oguchi A."/>
            <person name="Ankai A."/>
            <person name="Yashiro I."/>
            <person name="Takahashi M."/>
            <person name="Terui Y."/>
            <person name="Fukui S."/>
            <person name="Yokoyama H."/>
            <person name="Tanikawa S."/>
            <person name="Hanada S."/>
            <person name="Kamagata Y."/>
            <person name="Fujita N."/>
        </authorList>
    </citation>
    <scope>NUCLEOTIDE SEQUENCE [LARGE SCALE GENOMIC DNA]</scope>
    <source>
        <strain>DSM 14586 / JCM 11422 / NBRC 100505 / T-27</strain>
    </source>
</reference>
<feature type="chain" id="PRO_1000214953" description="Large ribosomal subunit protein uL13">
    <location>
        <begin position="1"/>
        <end position="149"/>
    </location>
</feature>
<name>RL13_GEMAT</name>
<evidence type="ECO:0000255" key="1">
    <source>
        <dbReference type="HAMAP-Rule" id="MF_01366"/>
    </source>
</evidence>
<evidence type="ECO:0000305" key="2"/>
<gene>
    <name evidence="1" type="primary">rplM</name>
    <name type="ordered locus">GAU_1778</name>
</gene>
<organism>
    <name type="scientific">Gemmatimonas aurantiaca (strain DSM 14586 / JCM 11422 / NBRC 100505 / T-27)</name>
    <dbReference type="NCBI Taxonomy" id="379066"/>
    <lineage>
        <taxon>Bacteria</taxon>
        <taxon>Pseudomonadati</taxon>
        <taxon>Gemmatimonadota</taxon>
        <taxon>Gemmatimonadia</taxon>
        <taxon>Gemmatimonadales</taxon>
        <taxon>Gemmatimonadaceae</taxon>
        <taxon>Gemmatimonas</taxon>
    </lineage>
</organism>